<feature type="chain" id="PRO_0000392901" description="Dermonecrotic toxin SdSicTox-betaIIB2i">
    <location>
        <begin position="1" status="less than"/>
        <end position="274"/>
    </location>
</feature>
<feature type="active site" evidence="5">
    <location>
        <position position="5"/>
    </location>
</feature>
<feature type="active site" description="Nucleophile" evidence="5">
    <location>
        <position position="41"/>
    </location>
</feature>
<feature type="binding site" evidence="5">
    <location>
        <position position="25"/>
    </location>
    <ligand>
        <name>Mg(2+)</name>
        <dbReference type="ChEBI" id="CHEBI:18420"/>
    </ligand>
</feature>
<feature type="binding site" evidence="5">
    <location>
        <position position="27"/>
    </location>
    <ligand>
        <name>Mg(2+)</name>
        <dbReference type="ChEBI" id="CHEBI:18420"/>
    </ligand>
</feature>
<feature type="binding site" evidence="5">
    <location>
        <position position="85"/>
    </location>
    <ligand>
        <name>Mg(2+)</name>
        <dbReference type="ChEBI" id="CHEBI:18420"/>
    </ligand>
</feature>
<feature type="disulfide bond" evidence="3">
    <location>
        <begin position="45"/>
        <end position="51"/>
    </location>
</feature>
<feature type="disulfide bond" evidence="3">
    <location>
        <begin position="47"/>
        <end position="190"/>
    </location>
</feature>
<feature type="non-terminal residue">
    <location>
        <position position="1"/>
    </location>
</feature>
<name>B2L1_SICCD</name>
<evidence type="ECO:0000250" key="1">
    <source>
        <dbReference type="UniProtKB" id="A0A0D4WTV1"/>
    </source>
</evidence>
<evidence type="ECO:0000250" key="2">
    <source>
        <dbReference type="UniProtKB" id="A0A0D4WV12"/>
    </source>
</evidence>
<evidence type="ECO:0000250" key="3">
    <source>
        <dbReference type="UniProtKB" id="P0CE80"/>
    </source>
</evidence>
<evidence type="ECO:0000250" key="4">
    <source>
        <dbReference type="UniProtKB" id="Q4ZFU2"/>
    </source>
</evidence>
<evidence type="ECO:0000250" key="5">
    <source>
        <dbReference type="UniProtKB" id="Q8I914"/>
    </source>
</evidence>
<evidence type="ECO:0000303" key="6">
    <source>
    </source>
</evidence>
<evidence type="ECO:0000305" key="7"/>
<evidence type="ECO:0000305" key="8">
    <source>
    </source>
</evidence>
<comment type="function">
    <text evidence="1 3">Dermonecrotic toxins cleave the phosphodiester linkage between the phosphate and headgroup of certain phospholipids (sphingolipid and lysolipid substrates), forming an alcohol (often choline) and a cyclic phosphate (By similarity). This toxin acts on sphingomyelin (SM) (By similarity). It may also act on ceramide phosphoethanolamine (CPE), lysophosphatidylcholine (LPC) and lysophosphatidylethanolamine (LPE), but not on lysophosphatidylserine (LPS), and lysophosphatidylglycerol (LPG) (By similarity). It acts by transphosphatidylation, releasing exclusively cyclic phosphate products as second products (By similarity). Induces dermonecrosis, hemolysis, increased vascular permeability, edema, inflammatory response, and platelet aggregation (By similarity).</text>
</comment>
<comment type="catalytic activity">
    <reaction evidence="1">
        <text>an N-(acyl)-sphingosylphosphocholine = an N-(acyl)-sphingosyl-1,3-cyclic phosphate + choline</text>
        <dbReference type="Rhea" id="RHEA:60652"/>
        <dbReference type="ChEBI" id="CHEBI:15354"/>
        <dbReference type="ChEBI" id="CHEBI:64583"/>
        <dbReference type="ChEBI" id="CHEBI:143892"/>
    </reaction>
</comment>
<comment type="catalytic activity">
    <reaction evidence="1">
        <text>an N-(acyl)-sphingosylphosphoethanolamine = an N-(acyl)-sphingosyl-1,3-cyclic phosphate + ethanolamine</text>
        <dbReference type="Rhea" id="RHEA:60648"/>
        <dbReference type="ChEBI" id="CHEBI:57603"/>
        <dbReference type="ChEBI" id="CHEBI:143891"/>
        <dbReference type="ChEBI" id="CHEBI:143892"/>
    </reaction>
</comment>
<comment type="catalytic activity">
    <reaction evidence="1">
        <text>a 1-acyl-sn-glycero-3-phosphocholine = a 1-acyl-sn-glycero-2,3-cyclic phosphate + choline</text>
        <dbReference type="Rhea" id="RHEA:60700"/>
        <dbReference type="ChEBI" id="CHEBI:15354"/>
        <dbReference type="ChEBI" id="CHEBI:58168"/>
        <dbReference type="ChEBI" id="CHEBI:143947"/>
    </reaction>
</comment>
<comment type="catalytic activity">
    <reaction evidence="1">
        <text>a 1-acyl-sn-glycero-3-phosphoethanolamine = a 1-acyl-sn-glycero-2,3-cyclic phosphate + ethanolamine</text>
        <dbReference type="Rhea" id="RHEA:60704"/>
        <dbReference type="ChEBI" id="CHEBI:57603"/>
        <dbReference type="ChEBI" id="CHEBI:64381"/>
        <dbReference type="ChEBI" id="CHEBI:143947"/>
    </reaction>
</comment>
<comment type="cofactor">
    <cofactor evidence="5">
        <name>Mg(2+)</name>
        <dbReference type="ChEBI" id="CHEBI:18420"/>
    </cofactor>
    <text evidence="5">Binds 1 Mg(2+) ion per subunit.</text>
</comment>
<comment type="subcellular location">
    <subcellularLocation>
        <location evidence="8">Secreted</location>
    </subcellularLocation>
</comment>
<comment type="tissue specificity">
    <text evidence="8">Expressed by the venom gland.</text>
</comment>
<comment type="similarity">
    <text evidence="7">Belongs to the arthropod phospholipase D family. Class II subfamily.</text>
</comment>
<comment type="caution">
    <text evidence="1 2 4">The most common activity assay for dermonecrotic toxins detects enzymatic activity by monitoring choline release from substrate. Liberation of choline from sphingomyelin (SM) or lysophosphatidylcholine (LPC) is commonly assumed to result from substrate hydrolysis, giving either ceramide-1-phosphate (C1P) or lysophosphatidic acid (LPA), respectively, as a second product. However, two studies from Lajoie and colleagues (2013 and 2015) report the observation of exclusive formation of cyclic phosphate products as second products, resulting from intramolecular transphosphatidylation. Cyclic phosphates have vastly different biological properties from their monoester counterparts, and they may be relevant to the pathology of brown spider envenomation.</text>
</comment>
<keyword id="KW-0204">Cytolysis</keyword>
<keyword id="KW-1061">Dermonecrotic toxin</keyword>
<keyword id="KW-1015">Disulfide bond</keyword>
<keyword id="KW-0354">Hemolysis</keyword>
<keyword id="KW-0442">Lipid degradation</keyword>
<keyword id="KW-0443">Lipid metabolism</keyword>
<keyword id="KW-0456">Lyase</keyword>
<keyword id="KW-0460">Magnesium</keyword>
<keyword id="KW-0479">Metal-binding</keyword>
<keyword id="KW-0964">Secreted</keyword>
<keyword id="KW-0800">Toxin</keyword>
<dbReference type="EC" id="4.6.1.-" evidence="4"/>
<dbReference type="EMBL" id="FJ171524">
    <property type="protein sequence ID" value="ACN49020.1"/>
    <property type="molecule type" value="mRNA"/>
</dbReference>
<dbReference type="SMR" id="C0JB89"/>
<dbReference type="GO" id="GO:0005576">
    <property type="term" value="C:extracellular region"/>
    <property type="evidence" value="ECO:0007669"/>
    <property type="project" value="UniProtKB-SubCell"/>
</dbReference>
<dbReference type="GO" id="GO:0016829">
    <property type="term" value="F:lyase activity"/>
    <property type="evidence" value="ECO:0007669"/>
    <property type="project" value="UniProtKB-KW"/>
</dbReference>
<dbReference type="GO" id="GO:0046872">
    <property type="term" value="F:metal ion binding"/>
    <property type="evidence" value="ECO:0007669"/>
    <property type="project" value="UniProtKB-KW"/>
</dbReference>
<dbReference type="GO" id="GO:0008081">
    <property type="term" value="F:phosphoric diester hydrolase activity"/>
    <property type="evidence" value="ECO:0007669"/>
    <property type="project" value="InterPro"/>
</dbReference>
<dbReference type="GO" id="GO:0090729">
    <property type="term" value="F:toxin activity"/>
    <property type="evidence" value="ECO:0007669"/>
    <property type="project" value="UniProtKB-KW"/>
</dbReference>
<dbReference type="GO" id="GO:0031640">
    <property type="term" value="P:killing of cells of another organism"/>
    <property type="evidence" value="ECO:0007669"/>
    <property type="project" value="UniProtKB-KW"/>
</dbReference>
<dbReference type="GO" id="GO:0016042">
    <property type="term" value="P:lipid catabolic process"/>
    <property type="evidence" value="ECO:0007669"/>
    <property type="project" value="UniProtKB-KW"/>
</dbReference>
<dbReference type="CDD" id="cd08576">
    <property type="entry name" value="GDPD_like_SMaseD_PLD"/>
    <property type="match status" value="1"/>
</dbReference>
<dbReference type="Gene3D" id="3.20.20.190">
    <property type="entry name" value="Phosphatidylinositol (PI) phosphodiesterase"/>
    <property type="match status" value="1"/>
</dbReference>
<dbReference type="InterPro" id="IPR017946">
    <property type="entry name" value="PLC-like_Pdiesterase_TIM-brl"/>
</dbReference>
<dbReference type="SUPFAM" id="SSF51695">
    <property type="entry name" value="PLC-like phosphodiesterases"/>
    <property type="match status" value="1"/>
</dbReference>
<proteinExistence type="evidence at transcript level"/>
<sequence length="274" mass="31562">WIMGHMVNGLEQVSEFLNLGANAIEFDIDFDQNGVAKITHHGIPCDCGRLCTKQTVFTEYLDNIRHVTTPGDPKFREQLILLALDLKLQRIPVEKAYAAGVDVATKLLDHYWQRGKSKARAYILLNLPLVQDYEFIRAFKDTLKNEGYEQYNDKVGVNFTGNEDLDEIRKVLKKVGVDKHVWQADGITSCFARGTDRLTEALKRRDTPGYNYAYKVYAWTLVKYSTMRRSLRLGVDGVMSNFPDRVVEVLKEEEFADKFRMATYDDNPWKKFTG</sequence>
<accession>C0JB89</accession>
<reference key="1">
    <citation type="journal article" date="2009" name="Mol. Biol. Evol.">
        <title>Molecular evolution, functional variation, and proposed nomenclature of the gene family that includes sphingomyelinase D in sicariid spider venoms.</title>
        <authorList>
            <person name="Binford G.J."/>
            <person name="Bodner M.R."/>
            <person name="Cordes M.H."/>
            <person name="Baldwin K.L."/>
            <person name="Rynerson M.R."/>
            <person name="Burns S.N."/>
            <person name="Zobel-Thropp P.A."/>
        </authorList>
    </citation>
    <scope>NUCLEOTIDE SEQUENCE [MRNA]</scope>
    <scope>NOMENCLATURE</scope>
    <source>
        <tissue>Venom gland</tissue>
    </source>
</reference>
<protein>
    <recommendedName>
        <fullName evidence="6">Dermonecrotic toxin SdSicTox-betaIIB2i</fullName>
        <ecNumber evidence="4">4.6.1.-</ecNumber>
    </recommendedName>
    <alternativeName>
        <fullName>Phospholipase D</fullName>
        <shortName>PLD</shortName>
    </alternativeName>
    <alternativeName>
        <fullName>Sphingomyelin phosphodiesterase D</fullName>
        <shortName>SMD</shortName>
        <shortName>SMase D</shortName>
        <shortName>Sphingomyelinase D</shortName>
    </alternativeName>
</protein>
<organism>
    <name type="scientific">Sicarius cf. damarensis (strain GJB-2008)</name>
    <name type="common">Six-eyed sand spider</name>
    <dbReference type="NCBI Taxonomy" id="575956"/>
    <lineage>
        <taxon>Eukaryota</taxon>
        <taxon>Metazoa</taxon>
        <taxon>Ecdysozoa</taxon>
        <taxon>Arthropoda</taxon>
        <taxon>Chelicerata</taxon>
        <taxon>Arachnida</taxon>
        <taxon>Araneae</taxon>
        <taxon>Araneomorphae</taxon>
        <taxon>Haplogynae</taxon>
        <taxon>Scytodoidea</taxon>
        <taxon>Sicariidae</taxon>
        <taxon>Sicarius</taxon>
    </lineage>
</organism>